<sequence>MEMLKAEVKPAVGCTEPVALALACAKAKELLGEEIVENRMLVSPSIYKNGMCVGIPGTERLGLKIAAALGIVGGHSENGLSVLETLTKEEVKIAEDYMDNTPLSITPADTREKVFIEVVLKGKNHIAKVRIRTKHDNFTFLEKDGEVLLDNEPKVSASNDAAEKAESLMDTVTIQELIKNVEEIDFKDIEFLLDGVKMNEEMAEYGLKQKTGIGVGYGIKKSIEEGLLGNDVINYAMMLTAGASDARMAGVKMPVMSSNGSGNHGLTAILPIVAYNKKFPQSDERLAKALAISHLVTGYIKNYTGRLSAVCGCGVAASTGATAGISWLMNGTEKQIEGAIENMIADLSGMICDGAKAGCALKLSSAASAAIQSAIIAKQDCFVPPLNGIVGSSVEQSIQNLGRVSDKGMSITDEIILNVMNDMNKVD</sequence>
<proteinExistence type="inferred from homology"/>
<gene>
    <name type="ordered locus">CD630_32320</name>
</gene>
<evidence type="ECO:0000255" key="1">
    <source>
        <dbReference type="HAMAP-Rule" id="MF_01845"/>
    </source>
</evidence>
<keyword id="KW-1185">Reference proteome</keyword>
<protein>
    <recommendedName>
        <fullName evidence="1">UPF0597 protein CD630_32320</fullName>
    </recommendedName>
</protein>
<name>Y3232_CLOD6</name>
<comment type="similarity">
    <text evidence="1">Belongs to the UPF0597 family.</text>
</comment>
<dbReference type="EMBL" id="AM180355">
    <property type="protein sequence ID" value="CAJ70130.1"/>
    <property type="molecule type" value="Genomic_DNA"/>
</dbReference>
<dbReference type="RefSeq" id="YP_001089749.1">
    <property type="nucleotide sequence ID" value="NC_009089.1"/>
</dbReference>
<dbReference type="SMR" id="Q17ZX7"/>
<dbReference type="STRING" id="272563.CD630_32320"/>
<dbReference type="EnsemblBacteria" id="CAJ70130">
    <property type="protein sequence ID" value="CAJ70130"/>
    <property type="gene ID" value="CD630_32320"/>
</dbReference>
<dbReference type="KEGG" id="cdf:CD630_32320"/>
<dbReference type="PATRIC" id="fig|272563.8.peg.3385"/>
<dbReference type="eggNOG" id="COG3681">
    <property type="taxonomic scope" value="Bacteria"/>
</dbReference>
<dbReference type="OrthoDB" id="41906at2"/>
<dbReference type="PhylomeDB" id="Q17ZX7"/>
<dbReference type="BioCyc" id="PDIF272563:G12WB-3399-MONOMER"/>
<dbReference type="Proteomes" id="UP000001978">
    <property type="component" value="Chromosome"/>
</dbReference>
<dbReference type="GO" id="GO:0080146">
    <property type="term" value="F:L-cysteine desulfhydrase activity"/>
    <property type="evidence" value="ECO:0007669"/>
    <property type="project" value="TreeGrafter"/>
</dbReference>
<dbReference type="GO" id="GO:0019450">
    <property type="term" value="P:L-cysteine catabolic process to pyruvate"/>
    <property type="evidence" value="ECO:0007669"/>
    <property type="project" value="TreeGrafter"/>
</dbReference>
<dbReference type="HAMAP" id="MF_01845">
    <property type="entry name" value="UPF0597"/>
    <property type="match status" value="1"/>
</dbReference>
<dbReference type="InterPro" id="IPR005130">
    <property type="entry name" value="Ser_deHydtase-like_asu"/>
</dbReference>
<dbReference type="InterPro" id="IPR021144">
    <property type="entry name" value="UPF0597"/>
</dbReference>
<dbReference type="PANTHER" id="PTHR30501">
    <property type="entry name" value="UPF0597 PROTEIN YHAM"/>
    <property type="match status" value="1"/>
</dbReference>
<dbReference type="PANTHER" id="PTHR30501:SF2">
    <property type="entry name" value="UPF0597 PROTEIN YHAM"/>
    <property type="match status" value="1"/>
</dbReference>
<dbReference type="Pfam" id="PF03313">
    <property type="entry name" value="SDH_alpha"/>
    <property type="match status" value="1"/>
</dbReference>
<dbReference type="PIRSF" id="PIRSF006054">
    <property type="entry name" value="UCP006054"/>
    <property type="match status" value="1"/>
</dbReference>
<reference key="1">
    <citation type="journal article" date="2006" name="Nat. Genet.">
        <title>The multidrug-resistant human pathogen Clostridium difficile has a highly mobile, mosaic genome.</title>
        <authorList>
            <person name="Sebaihia M."/>
            <person name="Wren B.W."/>
            <person name="Mullany P."/>
            <person name="Fairweather N.F."/>
            <person name="Minton N."/>
            <person name="Stabler R."/>
            <person name="Thomson N.R."/>
            <person name="Roberts A.P."/>
            <person name="Cerdeno-Tarraga A.M."/>
            <person name="Wang H."/>
            <person name="Holden M.T.G."/>
            <person name="Wright A."/>
            <person name="Churcher C."/>
            <person name="Quail M.A."/>
            <person name="Baker S."/>
            <person name="Bason N."/>
            <person name="Brooks K."/>
            <person name="Chillingworth T."/>
            <person name="Cronin A."/>
            <person name="Davis P."/>
            <person name="Dowd L."/>
            <person name="Fraser A."/>
            <person name="Feltwell T."/>
            <person name="Hance Z."/>
            <person name="Holroyd S."/>
            <person name="Jagels K."/>
            <person name="Moule S."/>
            <person name="Mungall K."/>
            <person name="Price C."/>
            <person name="Rabbinowitsch E."/>
            <person name="Sharp S."/>
            <person name="Simmonds M."/>
            <person name="Stevens K."/>
            <person name="Unwin L."/>
            <person name="Whithead S."/>
            <person name="Dupuy B."/>
            <person name="Dougan G."/>
            <person name="Barrell B."/>
            <person name="Parkhill J."/>
        </authorList>
    </citation>
    <scope>NUCLEOTIDE SEQUENCE [LARGE SCALE GENOMIC DNA]</scope>
    <source>
        <strain>630</strain>
    </source>
</reference>
<organism>
    <name type="scientific">Clostridioides difficile (strain 630)</name>
    <name type="common">Peptoclostridium difficile</name>
    <dbReference type="NCBI Taxonomy" id="272563"/>
    <lineage>
        <taxon>Bacteria</taxon>
        <taxon>Bacillati</taxon>
        <taxon>Bacillota</taxon>
        <taxon>Clostridia</taxon>
        <taxon>Peptostreptococcales</taxon>
        <taxon>Peptostreptococcaceae</taxon>
        <taxon>Clostridioides</taxon>
    </lineage>
</organism>
<feature type="chain" id="PRO_0000339805" description="UPF0597 protein CD630_32320">
    <location>
        <begin position="1"/>
        <end position="427"/>
    </location>
</feature>
<accession>Q17ZX7</accession>